<gene>
    <name evidence="1" type="primary">hisH</name>
    <name type="ordered locus">mlr5011</name>
</gene>
<comment type="function">
    <text evidence="1">IGPS catalyzes the conversion of PRFAR and glutamine to IGP, AICAR and glutamate. The HisH subunit catalyzes the hydrolysis of glutamine to glutamate and ammonia as part of the synthesis of IGP and AICAR. The resulting ammonia molecule is channeled to the active site of HisF.</text>
</comment>
<comment type="catalytic activity">
    <reaction evidence="1">
        <text>5-[(5-phospho-1-deoxy-D-ribulos-1-ylimino)methylamino]-1-(5-phospho-beta-D-ribosyl)imidazole-4-carboxamide + L-glutamine = D-erythro-1-(imidazol-4-yl)glycerol 3-phosphate + 5-amino-1-(5-phospho-beta-D-ribosyl)imidazole-4-carboxamide + L-glutamate + H(+)</text>
        <dbReference type="Rhea" id="RHEA:24793"/>
        <dbReference type="ChEBI" id="CHEBI:15378"/>
        <dbReference type="ChEBI" id="CHEBI:29985"/>
        <dbReference type="ChEBI" id="CHEBI:58278"/>
        <dbReference type="ChEBI" id="CHEBI:58359"/>
        <dbReference type="ChEBI" id="CHEBI:58475"/>
        <dbReference type="ChEBI" id="CHEBI:58525"/>
        <dbReference type="EC" id="4.3.2.10"/>
    </reaction>
</comment>
<comment type="catalytic activity">
    <reaction evidence="1">
        <text>L-glutamine + H2O = L-glutamate + NH4(+)</text>
        <dbReference type="Rhea" id="RHEA:15889"/>
        <dbReference type="ChEBI" id="CHEBI:15377"/>
        <dbReference type="ChEBI" id="CHEBI:28938"/>
        <dbReference type="ChEBI" id="CHEBI:29985"/>
        <dbReference type="ChEBI" id="CHEBI:58359"/>
        <dbReference type="EC" id="3.5.1.2"/>
    </reaction>
</comment>
<comment type="pathway">
    <text evidence="1">Amino-acid biosynthesis; L-histidine biosynthesis; L-histidine from 5-phospho-alpha-D-ribose 1-diphosphate: step 5/9.</text>
</comment>
<comment type="subunit">
    <text evidence="1">Heterodimer of HisH and HisF.</text>
</comment>
<comment type="subcellular location">
    <subcellularLocation>
        <location evidence="1">Cytoplasm</location>
    </subcellularLocation>
</comment>
<sequence length="216" mass="23331">MRVAIIDYGSGNLRSATKAFERAAREGGISAEIDLTADADRVRTADRIVLPGVGAYADCAAGLRAVDGMWEAVEDVAIAQSRPFLGICVGMQLMSERGLEKTVTHGFGWISGDVKEITPTDPALKIPQIGWNTIELRRQHPLFAGIPTGPEGLHAYFVHSYHLDAKKPDEILAVADYGGPVTAAVARDNLVGTQFHPEKSQALGLALITNFLRWRP</sequence>
<reference key="1">
    <citation type="journal article" date="2000" name="DNA Res.">
        <title>Complete genome structure of the nitrogen-fixing symbiotic bacterium Mesorhizobium loti.</title>
        <authorList>
            <person name="Kaneko T."/>
            <person name="Nakamura Y."/>
            <person name="Sato S."/>
            <person name="Asamizu E."/>
            <person name="Kato T."/>
            <person name="Sasamoto S."/>
            <person name="Watanabe A."/>
            <person name="Idesawa K."/>
            <person name="Ishikawa A."/>
            <person name="Kawashima K."/>
            <person name="Kimura T."/>
            <person name="Kishida Y."/>
            <person name="Kiyokawa C."/>
            <person name="Kohara M."/>
            <person name="Matsumoto M."/>
            <person name="Matsuno A."/>
            <person name="Mochizuki Y."/>
            <person name="Nakayama S."/>
            <person name="Nakazaki N."/>
            <person name="Shimpo S."/>
            <person name="Sugimoto M."/>
            <person name="Takeuchi C."/>
            <person name="Yamada M."/>
            <person name="Tabata S."/>
        </authorList>
    </citation>
    <scope>NUCLEOTIDE SEQUENCE [LARGE SCALE GENOMIC DNA]</scope>
    <source>
        <strain>LMG 29417 / CECT 9101 / MAFF 303099</strain>
    </source>
</reference>
<dbReference type="EC" id="4.3.2.10" evidence="1"/>
<dbReference type="EC" id="3.5.1.2" evidence="1"/>
<dbReference type="EMBL" id="BA000012">
    <property type="protein sequence ID" value="BAB51536.1"/>
    <property type="molecule type" value="Genomic_DNA"/>
</dbReference>
<dbReference type="RefSeq" id="WP_010912877.1">
    <property type="nucleotide sequence ID" value="NC_002678.2"/>
</dbReference>
<dbReference type="SMR" id="Q98CT5"/>
<dbReference type="MEROPS" id="C26.965"/>
<dbReference type="KEGG" id="mlo:mlr5011"/>
<dbReference type="PATRIC" id="fig|266835.9.peg.3956"/>
<dbReference type="eggNOG" id="COG0118">
    <property type="taxonomic scope" value="Bacteria"/>
</dbReference>
<dbReference type="HOGENOM" id="CLU_071837_2_0_5"/>
<dbReference type="UniPathway" id="UPA00031">
    <property type="reaction ID" value="UER00010"/>
</dbReference>
<dbReference type="Proteomes" id="UP000000552">
    <property type="component" value="Chromosome"/>
</dbReference>
<dbReference type="GO" id="GO:0005737">
    <property type="term" value="C:cytoplasm"/>
    <property type="evidence" value="ECO:0007669"/>
    <property type="project" value="UniProtKB-SubCell"/>
</dbReference>
<dbReference type="GO" id="GO:0004359">
    <property type="term" value="F:glutaminase activity"/>
    <property type="evidence" value="ECO:0007669"/>
    <property type="project" value="UniProtKB-EC"/>
</dbReference>
<dbReference type="GO" id="GO:0000107">
    <property type="term" value="F:imidazoleglycerol-phosphate synthase activity"/>
    <property type="evidence" value="ECO:0007669"/>
    <property type="project" value="UniProtKB-UniRule"/>
</dbReference>
<dbReference type="GO" id="GO:0016829">
    <property type="term" value="F:lyase activity"/>
    <property type="evidence" value="ECO:0007669"/>
    <property type="project" value="UniProtKB-KW"/>
</dbReference>
<dbReference type="GO" id="GO:0000105">
    <property type="term" value="P:L-histidine biosynthetic process"/>
    <property type="evidence" value="ECO:0007669"/>
    <property type="project" value="UniProtKB-UniRule"/>
</dbReference>
<dbReference type="CDD" id="cd01748">
    <property type="entry name" value="GATase1_IGP_Synthase"/>
    <property type="match status" value="1"/>
</dbReference>
<dbReference type="Gene3D" id="3.40.50.880">
    <property type="match status" value="1"/>
</dbReference>
<dbReference type="HAMAP" id="MF_00278">
    <property type="entry name" value="HisH"/>
    <property type="match status" value="1"/>
</dbReference>
<dbReference type="InterPro" id="IPR029062">
    <property type="entry name" value="Class_I_gatase-like"/>
</dbReference>
<dbReference type="InterPro" id="IPR017926">
    <property type="entry name" value="GATASE"/>
</dbReference>
<dbReference type="InterPro" id="IPR010139">
    <property type="entry name" value="Imidazole-glycPsynth_HisH"/>
</dbReference>
<dbReference type="NCBIfam" id="TIGR01855">
    <property type="entry name" value="IMP_synth_hisH"/>
    <property type="match status" value="1"/>
</dbReference>
<dbReference type="PANTHER" id="PTHR42701">
    <property type="entry name" value="IMIDAZOLE GLYCEROL PHOSPHATE SYNTHASE SUBUNIT HISH"/>
    <property type="match status" value="1"/>
</dbReference>
<dbReference type="PANTHER" id="PTHR42701:SF1">
    <property type="entry name" value="IMIDAZOLE GLYCEROL PHOSPHATE SYNTHASE SUBUNIT HISH"/>
    <property type="match status" value="1"/>
</dbReference>
<dbReference type="Pfam" id="PF00117">
    <property type="entry name" value="GATase"/>
    <property type="match status" value="1"/>
</dbReference>
<dbReference type="PIRSF" id="PIRSF000495">
    <property type="entry name" value="Amidotransf_hisH"/>
    <property type="match status" value="1"/>
</dbReference>
<dbReference type="SUPFAM" id="SSF52317">
    <property type="entry name" value="Class I glutamine amidotransferase-like"/>
    <property type="match status" value="1"/>
</dbReference>
<dbReference type="PROSITE" id="PS51273">
    <property type="entry name" value="GATASE_TYPE_1"/>
    <property type="match status" value="1"/>
</dbReference>
<organism>
    <name type="scientific">Mesorhizobium japonicum (strain LMG 29417 / CECT 9101 / MAFF 303099)</name>
    <name type="common">Mesorhizobium loti (strain MAFF 303099)</name>
    <dbReference type="NCBI Taxonomy" id="266835"/>
    <lineage>
        <taxon>Bacteria</taxon>
        <taxon>Pseudomonadati</taxon>
        <taxon>Pseudomonadota</taxon>
        <taxon>Alphaproteobacteria</taxon>
        <taxon>Hyphomicrobiales</taxon>
        <taxon>Phyllobacteriaceae</taxon>
        <taxon>Mesorhizobium</taxon>
    </lineage>
</organism>
<feature type="chain" id="PRO_0000152413" description="Imidazole glycerol phosphate synthase subunit HisH">
    <location>
        <begin position="1"/>
        <end position="216"/>
    </location>
</feature>
<feature type="domain" description="Glutamine amidotransferase type-1" evidence="1">
    <location>
        <begin position="2"/>
        <end position="216"/>
    </location>
</feature>
<feature type="active site" description="Nucleophile" evidence="1">
    <location>
        <position position="88"/>
    </location>
</feature>
<feature type="active site" evidence="1">
    <location>
        <position position="196"/>
    </location>
</feature>
<feature type="active site" evidence="1">
    <location>
        <position position="198"/>
    </location>
</feature>
<proteinExistence type="inferred from homology"/>
<name>HIS5_RHILO</name>
<protein>
    <recommendedName>
        <fullName evidence="1">Imidazole glycerol phosphate synthase subunit HisH</fullName>
        <ecNumber evidence="1">4.3.2.10</ecNumber>
    </recommendedName>
    <alternativeName>
        <fullName evidence="1">IGP synthase glutaminase subunit</fullName>
        <ecNumber evidence="1">3.5.1.2</ecNumber>
    </alternativeName>
    <alternativeName>
        <fullName evidence="1">IGP synthase subunit HisH</fullName>
    </alternativeName>
    <alternativeName>
        <fullName evidence="1">ImGP synthase subunit HisH</fullName>
        <shortName evidence="1">IGPS subunit HisH</shortName>
    </alternativeName>
</protein>
<accession>Q98CT5</accession>
<keyword id="KW-0028">Amino-acid biosynthesis</keyword>
<keyword id="KW-0963">Cytoplasm</keyword>
<keyword id="KW-0315">Glutamine amidotransferase</keyword>
<keyword id="KW-0368">Histidine biosynthesis</keyword>
<keyword id="KW-0378">Hydrolase</keyword>
<keyword id="KW-0456">Lyase</keyword>
<evidence type="ECO:0000255" key="1">
    <source>
        <dbReference type="HAMAP-Rule" id="MF_00278"/>
    </source>
</evidence>